<dbReference type="EC" id="3.1.21.-"/>
<dbReference type="EMBL" id="Y11023">
    <property type="protein sequence ID" value="CAA71907.1"/>
    <property type="molecule type" value="Genomic_DNA"/>
</dbReference>
<dbReference type="EMBL" id="DQ458791">
    <property type="protein sequence ID" value="ABE67103.1"/>
    <property type="molecule type" value="Genomic_DNA"/>
</dbReference>
<dbReference type="RefSeq" id="NP_612222.1">
    <molecule id="O39521-1"/>
    <property type="nucleotide sequence ID" value="NC_003493.2"/>
</dbReference>
<dbReference type="SMR" id="O39521"/>
<dbReference type="GeneID" id="935291"/>
<dbReference type="KEGG" id="vg:935291"/>
<dbReference type="OrthoDB" id="9195at10239"/>
<dbReference type="Proteomes" id="UP000007453">
    <property type="component" value="Genome"/>
</dbReference>
<dbReference type="GO" id="GO:0030430">
    <property type="term" value="C:host cell cytoplasm"/>
    <property type="evidence" value="ECO:0007669"/>
    <property type="project" value="UniProtKB-SubCell"/>
</dbReference>
<dbReference type="GO" id="GO:0042025">
    <property type="term" value="C:host cell nucleus"/>
    <property type="evidence" value="ECO:0007669"/>
    <property type="project" value="UniProtKB-SubCell"/>
</dbReference>
<dbReference type="GO" id="GO:0003677">
    <property type="term" value="F:DNA binding"/>
    <property type="evidence" value="ECO:0007669"/>
    <property type="project" value="UniProtKB-KW"/>
</dbReference>
<dbReference type="GO" id="GO:0016888">
    <property type="term" value="F:endodeoxyribonuclease activity, producing 5'-phosphomonoesters"/>
    <property type="evidence" value="ECO:0007669"/>
    <property type="project" value="InterPro"/>
</dbReference>
<dbReference type="GO" id="GO:0046872">
    <property type="term" value="F:metal ion binding"/>
    <property type="evidence" value="ECO:0007669"/>
    <property type="project" value="UniProtKB-KW"/>
</dbReference>
<dbReference type="GO" id="GO:0000166">
    <property type="term" value="F:nucleotide binding"/>
    <property type="evidence" value="ECO:0007669"/>
    <property type="project" value="UniProtKB-KW"/>
</dbReference>
<dbReference type="GO" id="GO:0016779">
    <property type="term" value="F:nucleotidyltransferase activity"/>
    <property type="evidence" value="ECO:0007669"/>
    <property type="project" value="UniProtKB-KW"/>
</dbReference>
<dbReference type="GO" id="GO:0005198">
    <property type="term" value="F:structural molecule activity"/>
    <property type="evidence" value="ECO:0007669"/>
    <property type="project" value="InterPro"/>
</dbReference>
<dbReference type="GO" id="GO:0006260">
    <property type="term" value="P:DNA replication"/>
    <property type="evidence" value="ECO:0007669"/>
    <property type="project" value="UniProtKB-KW"/>
</dbReference>
<dbReference type="GO" id="GO:0039645">
    <property type="term" value="P:symbiont-mediated perturbation of host cell cycle G1/S transition checkpoint"/>
    <property type="evidence" value="ECO:0007669"/>
    <property type="project" value="UniProtKB-KW"/>
</dbReference>
<dbReference type="Gene3D" id="3.40.1310.20">
    <property type="match status" value="1"/>
</dbReference>
<dbReference type="InterPro" id="IPR049912">
    <property type="entry name" value="CRESS_DNA_REP"/>
</dbReference>
<dbReference type="InterPro" id="IPR001146">
    <property type="entry name" value="Gemini_AL1_MSV"/>
</dbReference>
<dbReference type="InterPro" id="IPR001191">
    <property type="entry name" value="Gemini_AL1_REP"/>
</dbReference>
<dbReference type="InterPro" id="IPR022692">
    <property type="entry name" value="Gemini_AL1_REP_central"/>
</dbReference>
<dbReference type="Pfam" id="PF00799">
    <property type="entry name" value="Gemini_AL1"/>
    <property type="match status" value="1"/>
</dbReference>
<dbReference type="Pfam" id="PF08283">
    <property type="entry name" value="Gemini_AL1_M"/>
    <property type="match status" value="1"/>
</dbReference>
<dbReference type="PRINTS" id="PR00227">
    <property type="entry name" value="GEMCOATAL1"/>
</dbReference>
<dbReference type="PRINTS" id="PR00229">
    <property type="entry name" value="GEMCOATMSVL1"/>
</dbReference>
<dbReference type="SUPFAM" id="SSF55464">
    <property type="entry name" value="Origin of replication-binding domain, RBD-like"/>
    <property type="match status" value="1"/>
</dbReference>
<dbReference type="PROSITE" id="PS52020">
    <property type="entry name" value="CRESS_DNA_REP"/>
    <property type="match status" value="1"/>
</dbReference>
<comment type="function">
    <text evidence="5 6">Implicated in enhancement of V-sense gene expression. Acts a an inhibitor of C-sense gene transcription.</text>
</comment>
<comment type="cofactor">
    <cofactor evidence="2">
        <name>Mg(2+)</name>
        <dbReference type="ChEBI" id="CHEBI:18420"/>
    </cofactor>
    <cofactor evidence="2">
        <name>Mn(2+)</name>
        <dbReference type="ChEBI" id="CHEBI:29035"/>
    </cofactor>
    <text evidence="2">Divalent metal cations, possibly Mg(2+) or Mn(2+).</text>
</comment>
<comment type="subunit">
    <text evidence="1">Homooligomer. Interacts with host retinoblastoma-related protein 1 (RBR1), and may thereby deregulate the host cell cycle. Part of the C- and V-complexes which are RepA-Rep-DNA complexes involved in the c-sense and v-sense transcription (By similarity).</text>
</comment>
<comment type="subcellular location">
    <subcellularLocation>
        <location evidence="6">Host nucleus</location>
    </subcellularLocation>
    <subcellularLocation>
        <location evidence="6">Host cytoplasm</location>
    </subcellularLocation>
    <text>distributed equally throughout both the nucleus and the cytoplasm.</text>
</comment>
<comment type="alternative products">
    <event type="alternative splicing"/>
    <isoform>
        <id>O39521-1</id>
        <name>RepA</name>
        <sequence type="displayed"/>
    </isoform>
    <isoform>
        <id>O39522-1</id>
        <name>Rep</name>
        <sequence type="external"/>
    </isoform>
</comment>
<comment type="domain">
    <text>There are three rolling circle replication (RCR) motifs. RCR-2 may be involved in metal coordination. RCR-3 is required for phosphodiester bond cleavage for initiation of RCR.</text>
</comment>
<comment type="miscellaneous">
    <molecule>Isoform RepA</molecule>
    <text>Produced from the unspliced transcript.</text>
</comment>
<comment type="similarity">
    <text evidence="7">Belongs to the geminiviridae Rep protein family.</text>
</comment>
<organism>
    <name type="scientific">Bean yellow dwarf virus</name>
    <name type="common">BeYDV</name>
    <dbReference type="NCBI Taxonomy" id="57119"/>
    <lineage>
        <taxon>Viruses</taxon>
        <taxon>Monodnaviria</taxon>
        <taxon>Shotokuvirae</taxon>
        <taxon>Cressdnaviricota</taxon>
        <taxon>Repensiviricetes</taxon>
        <taxon>Geplafuvirales</taxon>
        <taxon>Geminiviridae</taxon>
        <taxon>Mastrevirus</taxon>
    </lineage>
</organism>
<accession>O39521</accession>
<accession>A4K7Q4</accession>
<protein>
    <recommendedName>
        <fullName>Replication-associated protein A</fullName>
        <shortName>RepA</shortName>
        <ecNumber>3.1.21.-</ecNumber>
    </recommendedName>
</protein>
<keyword id="KW-0010">Activator</keyword>
<keyword id="KW-0025">Alternative splicing</keyword>
<keyword id="KW-0190">Covalent protein-DNA linkage</keyword>
<keyword id="KW-0235">DNA replication</keyword>
<keyword id="KW-0238">DNA-binding</keyword>
<keyword id="KW-0255">Endonuclease</keyword>
<keyword id="KW-1078">G1/S host cell cycle checkpoint dysregulation by virus</keyword>
<keyword id="KW-1035">Host cytoplasm</keyword>
<keyword id="KW-1048">Host nucleus</keyword>
<keyword id="KW-0945">Host-virus interaction</keyword>
<keyword id="KW-0378">Hydrolase</keyword>
<keyword id="KW-0479">Metal-binding</keyword>
<keyword id="KW-1121">Modulation of host cell cycle by virus</keyword>
<keyword id="KW-0540">Nuclease</keyword>
<keyword id="KW-0547">Nucleotide-binding</keyword>
<keyword id="KW-0548">Nucleotidyltransferase</keyword>
<keyword id="KW-1185">Reference proteome</keyword>
<keyword id="KW-0678">Repressor</keyword>
<keyword id="KW-0808">Transferase</keyword>
<feature type="chain" id="PRO_0000318770" description="Replication-associated protein A">
    <location>
        <begin position="1"/>
        <end position="292"/>
    </location>
</feature>
<feature type="domain" description="CRESS-DNA virus Rep endonuclease" evidence="2">
    <location>
        <begin position="9"/>
        <end position="111"/>
    </location>
</feature>
<feature type="region of interest" description="Oligomerization" evidence="1">
    <location>
        <begin position="160"/>
        <end position="172"/>
    </location>
</feature>
<feature type="region of interest" description="Binding to RBR1">
    <location>
        <begin position="181"/>
        <end position="185"/>
    </location>
</feature>
<feature type="region of interest" description="Disordered" evidence="3">
    <location>
        <begin position="230"/>
        <end position="292"/>
    </location>
</feature>
<feature type="short sequence motif" description="RCR-1" evidence="2">
    <location>
        <begin position="16"/>
        <end position="19"/>
    </location>
</feature>
<feature type="short sequence motif" description="RCR-2" evidence="2">
    <location>
        <begin position="58"/>
        <end position="60"/>
    </location>
</feature>
<feature type="short sequence motif" description="RCR-3" evidence="2">
    <location>
        <begin position="98"/>
        <end position="101"/>
    </location>
</feature>
<feature type="compositionally biased region" description="Low complexity" evidence="3">
    <location>
        <begin position="255"/>
        <end position="292"/>
    </location>
</feature>
<feature type="active site" description="For DNA cleavage activity" evidence="2">
    <location>
        <position position="98"/>
    </location>
</feature>
<feature type="binding site" evidence="2">
    <location>
        <position position="50"/>
    </location>
    <ligand>
        <name>a divalent metal cation</name>
        <dbReference type="ChEBI" id="CHEBI:60240"/>
    </ligand>
</feature>
<feature type="binding site" evidence="2">
    <location>
        <position position="58"/>
    </location>
    <ligand>
        <name>a divalent metal cation</name>
        <dbReference type="ChEBI" id="CHEBI:60240"/>
    </ligand>
</feature>
<feature type="binding site" evidence="2">
    <location>
        <position position="60"/>
    </location>
    <ligand>
        <name>a divalent metal cation</name>
        <dbReference type="ChEBI" id="CHEBI:60240"/>
    </ligand>
</feature>
<feature type="binding site" evidence="2">
    <location>
        <position position="102"/>
    </location>
    <ligand>
        <name>a divalent metal cation</name>
        <dbReference type="ChEBI" id="CHEBI:60240"/>
    </ligand>
</feature>
<feature type="sequence variant" description="In strain: Mild.">
    <original>I</original>
    <variation>L</variation>
    <location>
        <position position="63"/>
    </location>
</feature>
<feature type="sequence variant" description="In strain: Mild.">
    <original>Q</original>
    <variation>P</variation>
    <location>
        <position position="171"/>
    </location>
</feature>
<feature type="sequence variant" description="In strain: Mild.">
    <original>N</original>
    <variation>S</variation>
    <location>
        <position position="189"/>
    </location>
</feature>
<feature type="sequence variant" description="In strain: Mild.">
    <original>F</original>
    <variation>Y</variation>
    <location>
        <position position="205"/>
    </location>
</feature>
<feature type="sequence variant" description="In strain: Mild.">
    <original>D</original>
    <variation>Q</variation>
    <location>
        <position position="212"/>
    </location>
</feature>
<feature type="sequence variant" description="In strain: Mild.">
    <original>MR</original>
    <variation>TM</variation>
    <location>
        <begin position="227"/>
        <end position="228"/>
    </location>
</feature>
<feature type="sequence variant" description="In strain: Mild.">
    <original>LG</original>
    <variation>ME</variation>
    <location>
        <begin position="231"/>
        <end position="232"/>
    </location>
</feature>
<feature type="sequence variant" description="In strain: Mild.">
    <original>G</original>
    <variation>D</variation>
    <location>
        <position position="256"/>
    </location>
</feature>
<feature type="sequence variant" description="In strain: Mild.">
    <original>T</original>
    <variation>I</variation>
    <location>
        <position position="260"/>
    </location>
</feature>
<feature type="sequence variant" description="In strain: Mild.">
    <original>G</original>
    <variation>V</variation>
    <location>
        <position position="263"/>
    </location>
</feature>
<feature type="sequence variant" description="In strain: Mild.">
    <original>T</original>
    <variation>I</variation>
    <location>
        <position position="266"/>
    </location>
</feature>
<feature type="mutagenesis site" description="20% loss of ability to bind RBR." evidence="4">
    <original>L</original>
    <variation>I</variation>
    <location>
        <position position="181"/>
    </location>
</feature>
<feature type="mutagenesis site" description="50% loss of ability to bind RBR." evidence="4">
    <original>C</original>
    <variation>S</variation>
    <location>
        <position position="183"/>
    </location>
</feature>
<feature type="mutagenesis site" description="95% loss of ability to bind RBR. Reduced replication efficiency." evidence="4 5">
    <original>E</original>
    <variation>Q</variation>
    <location>
        <position position="185"/>
    </location>
</feature>
<name>REPA_BEYDV</name>
<gene>
    <name type="ORF">C1</name>
</gene>
<sequence>MPSASKNFRLQSKYVFLTYPKCSSQRDDLFQFLWEKLTPFLIFFLGVASELHQDGTTHYHALIQLDKKPCIRDPSFFDFEGNHPNIQPARNSKQVLDYISKDGDIKTRGDFRDHKVSPRKSDARWRTIIQTATSKEEYLDMIKEEFPHEWATKLQWLEYSANKLFPPQPEQYVSPFTESDLRCHEDLHNWRETHLYHVSIDAYTFIHPVSYDQAQSDLEWMADLTRMREGLGSDTPASTSADQLVPERPPGLEVSGDTTTGTGPSTSPTTMNTPPIISSTTSPSSSSHCGSN</sequence>
<reference key="1">
    <citation type="journal article" date="1997" name="J. Gen. Virol.">
        <title>Molecular characterization of a subgroup I geminivirus from a legume.</title>
        <authorList>
            <person name="Liu L."/>
            <person name="van Tonder T."/>
            <person name="Pietersen G."/>
            <person name="Davies J.W."/>
            <person name="Stanley J."/>
        </authorList>
    </citation>
    <scope>NUCLEOTIDE SEQUENCE [GENOMIC DNA]</scope>
</reference>
<reference key="2">
    <citation type="journal article" date="2007" name="Arch. Virol.">
        <title>The complete nucleotide sequence of a mild strain of Bean yellow dwarf virus.</title>
        <authorList>
            <person name="Halley-Stott R.P."/>
            <person name="Tanzer F."/>
            <person name="Martin D.P."/>
            <person name="Rybicki E.P."/>
        </authorList>
    </citation>
    <scope>NUCLEOTIDE SEQUENCE [GENOMIC DNA]</scope>
    <source>
        <strain>Mild</strain>
    </source>
</reference>
<reference key="3">
    <citation type="journal article" date="1999" name="Virology">
        <title>Bean yellow dwarf virus RepA, but not rep, binds to maize retinoblastoma protein, and the virus tolerates mutations in the consensus binding motif.</title>
        <authorList>
            <person name="Liu L."/>
            <person name="Saunders K."/>
            <person name="Thomas C.L."/>
            <person name="Davies J.W."/>
            <person name="Stanley J."/>
        </authorList>
    </citation>
    <scope>INTERACTION WITH ZEA MAYS RBR1</scope>
    <scope>MUTAGENESIS OF LEU-181; CYS-183 AND GLU-185</scope>
</reference>
<reference key="4">
    <citation type="journal article" date="2003" name="J. Gen. Virol.">
        <title>Independent expression of Rep and RepA and their roles in regulating bean yellow dwarf virus replication.</title>
        <authorList>
            <person name="Hefferon K.L."/>
            <person name="Dugdale B."/>
        </authorList>
    </citation>
    <scope>FUNCTION</scope>
    <scope>INTERACTION WITH ZEA MAYS RBR1</scope>
    <scope>MUTAGENESIS OF GLU-185</scope>
</reference>
<reference key="5">
    <citation type="journal article" date="2006" name="FEBS J.">
        <title>Multi-tasking of nonstructural gene products is required for bean yellow dwarf geminivirus transcriptional regulation.</title>
        <authorList>
            <person name="Hefferon K.L."/>
            <person name="Moon Y.-S."/>
            <person name="Fan Y."/>
        </authorList>
    </citation>
    <scope>FUNCTION</scope>
    <scope>SUBCELLULAR LOCATION</scope>
</reference>
<proteinExistence type="evidence at protein level"/>
<organismHost>
    <name type="scientific">Phaseolus vulgaris</name>
    <name type="common">Kidney bean</name>
    <name type="synonym">French bean</name>
    <dbReference type="NCBI Taxonomy" id="3885"/>
</organismHost>
<evidence type="ECO:0000250" key="1"/>
<evidence type="ECO:0000255" key="2">
    <source>
        <dbReference type="PROSITE-ProRule" id="PRU01364"/>
    </source>
</evidence>
<evidence type="ECO:0000256" key="3">
    <source>
        <dbReference type="SAM" id="MobiDB-lite"/>
    </source>
</evidence>
<evidence type="ECO:0000269" key="4">
    <source>
    </source>
</evidence>
<evidence type="ECO:0000269" key="5">
    <source>
    </source>
</evidence>
<evidence type="ECO:0000269" key="6">
    <source>
    </source>
</evidence>
<evidence type="ECO:0000305" key="7"/>